<accession>Q1QL75</accession>
<feature type="chain" id="PRO_0000256580" description="Trigger factor">
    <location>
        <begin position="1"/>
        <end position="453"/>
    </location>
</feature>
<feature type="domain" description="PPIase FKBP-type" evidence="1">
    <location>
        <begin position="171"/>
        <end position="256"/>
    </location>
</feature>
<gene>
    <name evidence="1" type="primary">tig</name>
    <name type="ordered locus">Nham_2230</name>
</gene>
<protein>
    <recommendedName>
        <fullName evidence="1">Trigger factor</fullName>
        <shortName evidence="1">TF</shortName>
        <ecNumber evidence="1">5.2.1.8</ecNumber>
    </recommendedName>
    <alternativeName>
        <fullName evidence="1">PPIase</fullName>
    </alternativeName>
</protein>
<organism>
    <name type="scientific">Nitrobacter hamburgensis (strain DSM 10229 / NCIMB 13809 / X14)</name>
    <dbReference type="NCBI Taxonomy" id="323097"/>
    <lineage>
        <taxon>Bacteria</taxon>
        <taxon>Pseudomonadati</taxon>
        <taxon>Pseudomonadota</taxon>
        <taxon>Alphaproteobacteria</taxon>
        <taxon>Hyphomicrobiales</taxon>
        <taxon>Nitrobacteraceae</taxon>
        <taxon>Nitrobacter</taxon>
    </lineage>
</organism>
<evidence type="ECO:0000255" key="1">
    <source>
        <dbReference type="HAMAP-Rule" id="MF_00303"/>
    </source>
</evidence>
<name>TIG_NITHX</name>
<comment type="function">
    <text evidence="1">Involved in protein export. Acts as a chaperone by maintaining the newly synthesized protein in an open conformation. Functions as a peptidyl-prolyl cis-trans isomerase.</text>
</comment>
<comment type="catalytic activity">
    <reaction evidence="1">
        <text>[protein]-peptidylproline (omega=180) = [protein]-peptidylproline (omega=0)</text>
        <dbReference type="Rhea" id="RHEA:16237"/>
        <dbReference type="Rhea" id="RHEA-COMP:10747"/>
        <dbReference type="Rhea" id="RHEA-COMP:10748"/>
        <dbReference type="ChEBI" id="CHEBI:83833"/>
        <dbReference type="ChEBI" id="CHEBI:83834"/>
        <dbReference type="EC" id="5.2.1.8"/>
    </reaction>
</comment>
<comment type="subcellular location">
    <subcellularLocation>
        <location>Cytoplasm</location>
    </subcellularLocation>
    <text evidence="1">About half TF is bound to the ribosome near the polypeptide exit tunnel while the other half is free in the cytoplasm.</text>
</comment>
<comment type="domain">
    <text evidence="1">Consists of 3 domains; the N-terminus binds the ribosome, the middle domain has PPIase activity, while the C-terminus has intrinsic chaperone activity on its own.</text>
</comment>
<comment type="similarity">
    <text evidence="1">Belongs to the FKBP-type PPIase family. Tig subfamily.</text>
</comment>
<proteinExistence type="inferred from homology"/>
<reference key="1">
    <citation type="submission" date="2006-03" db="EMBL/GenBank/DDBJ databases">
        <title>Complete sequence of chromosome of Nitrobacter hamburgensis X14.</title>
        <authorList>
            <consortium name="US DOE Joint Genome Institute"/>
            <person name="Copeland A."/>
            <person name="Lucas S."/>
            <person name="Lapidus A."/>
            <person name="Barry K."/>
            <person name="Detter J.C."/>
            <person name="Glavina del Rio T."/>
            <person name="Hammon N."/>
            <person name="Israni S."/>
            <person name="Dalin E."/>
            <person name="Tice H."/>
            <person name="Pitluck S."/>
            <person name="Chain P."/>
            <person name="Malfatti S."/>
            <person name="Shin M."/>
            <person name="Vergez L."/>
            <person name="Schmutz J."/>
            <person name="Larimer F."/>
            <person name="Land M."/>
            <person name="Hauser L."/>
            <person name="Kyrpides N."/>
            <person name="Ivanova N."/>
            <person name="Ward B."/>
            <person name="Arp D."/>
            <person name="Klotz M."/>
            <person name="Stein L."/>
            <person name="O'Mullan G."/>
            <person name="Starkenburg S."/>
            <person name="Sayavedra L."/>
            <person name="Poret-Peterson A.T."/>
            <person name="Gentry M.E."/>
            <person name="Bruce D."/>
            <person name="Richardson P."/>
        </authorList>
    </citation>
    <scope>NUCLEOTIDE SEQUENCE [LARGE SCALE GENOMIC DNA]</scope>
    <source>
        <strain>DSM 10229 / NCIMB 13809 / X14</strain>
    </source>
</reference>
<keyword id="KW-0131">Cell cycle</keyword>
<keyword id="KW-0132">Cell division</keyword>
<keyword id="KW-0143">Chaperone</keyword>
<keyword id="KW-0963">Cytoplasm</keyword>
<keyword id="KW-0413">Isomerase</keyword>
<keyword id="KW-1185">Reference proteome</keyword>
<keyword id="KW-0697">Rotamase</keyword>
<dbReference type="EC" id="5.2.1.8" evidence="1"/>
<dbReference type="EMBL" id="CP000319">
    <property type="protein sequence ID" value="ABE63022.1"/>
    <property type="molecule type" value="Genomic_DNA"/>
</dbReference>
<dbReference type="RefSeq" id="WP_011510699.1">
    <property type="nucleotide sequence ID" value="NC_007964.1"/>
</dbReference>
<dbReference type="SMR" id="Q1QL75"/>
<dbReference type="STRING" id="323097.Nham_2230"/>
<dbReference type="KEGG" id="nha:Nham_2230"/>
<dbReference type="eggNOG" id="COG0544">
    <property type="taxonomic scope" value="Bacteria"/>
</dbReference>
<dbReference type="HOGENOM" id="CLU_033058_2_2_5"/>
<dbReference type="OrthoDB" id="9767721at2"/>
<dbReference type="Proteomes" id="UP000001953">
    <property type="component" value="Chromosome"/>
</dbReference>
<dbReference type="GO" id="GO:0005737">
    <property type="term" value="C:cytoplasm"/>
    <property type="evidence" value="ECO:0007669"/>
    <property type="project" value="UniProtKB-SubCell"/>
</dbReference>
<dbReference type="GO" id="GO:0003755">
    <property type="term" value="F:peptidyl-prolyl cis-trans isomerase activity"/>
    <property type="evidence" value="ECO:0007669"/>
    <property type="project" value="UniProtKB-UniRule"/>
</dbReference>
<dbReference type="GO" id="GO:0044183">
    <property type="term" value="F:protein folding chaperone"/>
    <property type="evidence" value="ECO:0007669"/>
    <property type="project" value="TreeGrafter"/>
</dbReference>
<dbReference type="GO" id="GO:0043022">
    <property type="term" value="F:ribosome binding"/>
    <property type="evidence" value="ECO:0007669"/>
    <property type="project" value="TreeGrafter"/>
</dbReference>
<dbReference type="GO" id="GO:0051083">
    <property type="term" value="P:'de novo' cotranslational protein folding"/>
    <property type="evidence" value="ECO:0007669"/>
    <property type="project" value="TreeGrafter"/>
</dbReference>
<dbReference type="GO" id="GO:0051301">
    <property type="term" value="P:cell division"/>
    <property type="evidence" value="ECO:0007669"/>
    <property type="project" value="UniProtKB-KW"/>
</dbReference>
<dbReference type="GO" id="GO:0061077">
    <property type="term" value="P:chaperone-mediated protein folding"/>
    <property type="evidence" value="ECO:0007669"/>
    <property type="project" value="TreeGrafter"/>
</dbReference>
<dbReference type="GO" id="GO:0015031">
    <property type="term" value="P:protein transport"/>
    <property type="evidence" value="ECO:0007669"/>
    <property type="project" value="UniProtKB-UniRule"/>
</dbReference>
<dbReference type="GO" id="GO:0043335">
    <property type="term" value="P:protein unfolding"/>
    <property type="evidence" value="ECO:0007669"/>
    <property type="project" value="TreeGrafter"/>
</dbReference>
<dbReference type="FunFam" id="3.10.50.40:FF:000001">
    <property type="entry name" value="Trigger factor"/>
    <property type="match status" value="1"/>
</dbReference>
<dbReference type="Gene3D" id="3.10.50.40">
    <property type="match status" value="1"/>
</dbReference>
<dbReference type="Gene3D" id="3.30.70.1050">
    <property type="entry name" value="Trigger factor ribosome-binding domain"/>
    <property type="match status" value="1"/>
</dbReference>
<dbReference type="Gene3D" id="1.10.3120.10">
    <property type="entry name" value="Trigger factor, C-terminal domain"/>
    <property type="match status" value="1"/>
</dbReference>
<dbReference type="HAMAP" id="MF_00303">
    <property type="entry name" value="Trigger_factor_Tig"/>
    <property type="match status" value="1"/>
</dbReference>
<dbReference type="InterPro" id="IPR046357">
    <property type="entry name" value="PPIase_dom_sf"/>
</dbReference>
<dbReference type="InterPro" id="IPR001179">
    <property type="entry name" value="PPIase_FKBP_dom"/>
</dbReference>
<dbReference type="InterPro" id="IPR005215">
    <property type="entry name" value="Trig_fac"/>
</dbReference>
<dbReference type="InterPro" id="IPR008880">
    <property type="entry name" value="Trigger_fac_C"/>
</dbReference>
<dbReference type="InterPro" id="IPR037041">
    <property type="entry name" value="Trigger_fac_C_sf"/>
</dbReference>
<dbReference type="InterPro" id="IPR008881">
    <property type="entry name" value="Trigger_fac_ribosome-bd_bac"/>
</dbReference>
<dbReference type="InterPro" id="IPR036611">
    <property type="entry name" value="Trigger_fac_ribosome-bd_sf"/>
</dbReference>
<dbReference type="InterPro" id="IPR027304">
    <property type="entry name" value="Trigger_fact/SurA_dom_sf"/>
</dbReference>
<dbReference type="NCBIfam" id="TIGR00115">
    <property type="entry name" value="tig"/>
    <property type="match status" value="1"/>
</dbReference>
<dbReference type="PANTHER" id="PTHR30560">
    <property type="entry name" value="TRIGGER FACTOR CHAPERONE AND PEPTIDYL-PROLYL CIS/TRANS ISOMERASE"/>
    <property type="match status" value="1"/>
</dbReference>
<dbReference type="PANTHER" id="PTHR30560:SF3">
    <property type="entry name" value="TRIGGER FACTOR-LIKE PROTEIN TIG, CHLOROPLASTIC"/>
    <property type="match status" value="1"/>
</dbReference>
<dbReference type="Pfam" id="PF00254">
    <property type="entry name" value="FKBP_C"/>
    <property type="match status" value="1"/>
</dbReference>
<dbReference type="Pfam" id="PF05698">
    <property type="entry name" value="Trigger_C"/>
    <property type="match status" value="1"/>
</dbReference>
<dbReference type="Pfam" id="PF05697">
    <property type="entry name" value="Trigger_N"/>
    <property type="match status" value="1"/>
</dbReference>
<dbReference type="PIRSF" id="PIRSF003095">
    <property type="entry name" value="Trigger_factor"/>
    <property type="match status" value="1"/>
</dbReference>
<dbReference type="SUPFAM" id="SSF54534">
    <property type="entry name" value="FKBP-like"/>
    <property type="match status" value="1"/>
</dbReference>
<dbReference type="SUPFAM" id="SSF109998">
    <property type="entry name" value="Triger factor/SurA peptide-binding domain-like"/>
    <property type="match status" value="1"/>
</dbReference>
<dbReference type="SUPFAM" id="SSF102735">
    <property type="entry name" value="Trigger factor ribosome-binding domain"/>
    <property type="match status" value="1"/>
</dbReference>
<dbReference type="PROSITE" id="PS50059">
    <property type="entry name" value="FKBP_PPIASE"/>
    <property type="match status" value="1"/>
</dbReference>
<sequence length="453" mass="50646">MQVNETLAEGLRHEFQISIPAAEITAKADARLVDLKDKVKLDGFRPGKVPVSHLKKMYGRSVMIETIEDTIRDTNMQIATDRGFKLAGNPKVTMPSEVKEIEDILAGKSDLSYSVAIEVVPAIELADFKTFSLEKPVVDVSDADVDEAIKRIADQNRSYSARAEGAKAENGDRVTISFKGTIDGELFEAGSSDDVLVVLGSNALIPGFEEQLVGIGAGETRVVKTSFPSNYMENDLAGKDAEFETKASLIEAPQDIKIDDEFAKLLGLEELDQLKQVVREQLSAEFARAMRQHLKRALLDRLDDTHKFDAPPSLVEEEFEQVWKTVTTEMETNKKTFADENTTEEAARVEYRQIADRRVRLSLVLSDIGEKNGIKVTDDEINRAVISRARQTPGREKEIWSYYQKNPQALAQVRAPLFENKVVDFILELATVTEKKVTREDLFKDHEAHSTEA</sequence>